<proteinExistence type="evidence at transcript level"/>
<sequence>MAALRALGGLRGVAAQVLRPGAGVRLPIQPSRGVRQWQPDVEWAQQFGGAVMYPSKETAHWKPPPWNDVEPPKDTIVKNMTLNFGPQHPAAHGVLRLVMELSGEMVRKCDPHIGLLHRGTEKLIEYKTYLQALPYFDRLDYVSMMCNEQAYSLAVEKLLNIRPPPRAQWIRVLFGEITRLLNHIMAVTTHALDLGAMTPFFWLFEEREKMFEFYERVSGARMHAAYIRPGGVHQDLPLGLMDDIYQFSKNFSLRLDELEELLTNNRIWRNRTIDIGVVTAEEALNYGFSGVMLRGSGIQWDLRKTQPYDVYDQVEFDVPVGSRGDCYDRYLCRVEEMRQSLRIIAQCLNKMPPGEIKVDDAKVSPPKRAEMKTSMESLIHHFKLYTEGYQVPPGATYTAIEAPKGEFGVYLVSDGSSRPYRCKIKAPGFAHLASLDKMSKGHMLADVVAIIGTQDIVFGEVDR</sequence>
<gene>
    <name type="primary">NDUFS2</name>
</gene>
<evidence type="ECO:0000250" key="1">
    <source>
        <dbReference type="UniProtKB" id="O75306"/>
    </source>
</evidence>
<evidence type="ECO:0000250" key="2">
    <source>
        <dbReference type="UniProtKB" id="P17694"/>
    </source>
</evidence>
<evidence type="ECO:0000250" key="3">
    <source>
        <dbReference type="UniProtKB" id="Q641Y2"/>
    </source>
</evidence>
<evidence type="ECO:0000250" key="4">
    <source>
        <dbReference type="UniProtKB" id="Q91WD5"/>
    </source>
</evidence>
<evidence type="ECO:0000255" key="5"/>
<evidence type="ECO:0000305" key="6"/>
<dbReference type="EC" id="7.1.1.2" evidence="4"/>
<dbReference type="EMBL" id="DQ885671">
    <property type="protein sequence ID" value="ABH12180.1"/>
    <property type="molecule type" value="mRNA"/>
</dbReference>
<dbReference type="RefSeq" id="XP_054359895.1">
    <property type="nucleotide sequence ID" value="XM_054503920.2"/>
</dbReference>
<dbReference type="RefSeq" id="XP_054359904.1">
    <property type="nucleotide sequence ID" value="XM_054503929.2"/>
</dbReference>
<dbReference type="RefSeq" id="XP_063505651.1">
    <property type="nucleotide sequence ID" value="XM_063649581.1"/>
</dbReference>
<dbReference type="RefSeq" id="XP_063505653.1">
    <property type="nucleotide sequence ID" value="XM_063649583.1"/>
</dbReference>
<dbReference type="RefSeq" id="XP_063505659.1">
    <property type="nucleotide sequence ID" value="XM_063649589.1"/>
</dbReference>
<dbReference type="SMR" id="Q0MQG3"/>
<dbReference type="GeneID" id="129045301"/>
<dbReference type="GO" id="GO:0005743">
    <property type="term" value="C:mitochondrial inner membrane"/>
    <property type="evidence" value="ECO:0000250"/>
    <property type="project" value="UniProtKB"/>
</dbReference>
<dbReference type="GO" id="GO:0005739">
    <property type="term" value="C:mitochondrion"/>
    <property type="evidence" value="ECO:0000250"/>
    <property type="project" value="UniProtKB"/>
</dbReference>
<dbReference type="GO" id="GO:0045271">
    <property type="term" value="C:respiratory chain complex I"/>
    <property type="evidence" value="ECO:0000250"/>
    <property type="project" value="UniProtKB"/>
</dbReference>
<dbReference type="GO" id="GO:0051539">
    <property type="term" value="F:4 iron, 4 sulfur cluster binding"/>
    <property type="evidence" value="ECO:0007669"/>
    <property type="project" value="UniProtKB-KW"/>
</dbReference>
<dbReference type="GO" id="GO:0046872">
    <property type="term" value="F:metal ion binding"/>
    <property type="evidence" value="ECO:0007669"/>
    <property type="project" value="UniProtKB-KW"/>
</dbReference>
<dbReference type="GO" id="GO:0051287">
    <property type="term" value="F:NAD binding"/>
    <property type="evidence" value="ECO:0007669"/>
    <property type="project" value="InterPro"/>
</dbReference>
<dbReference type="GO" id="GO:0008137">
    <property type="term" value="F:NADH dehydrogenase (ubiquinone) activity"/>
    <property type="evidence" value="ECO:0000250"/>
    <property type="project" value="UniProtKB"/>
</dbReference>
<dbReference type="GO" id="GO:0019826">
    <property type="term" value="F:oxygen sensor activity"/>
    <property type="evidence" value="ECO:0000250"/>
    <property type="project" value="UniProtKB"/>
</dbReference>
<dbReference type="GO" id="GO:0048038">
    <property type="term" value="F:quinone binding"/>
    <property type="evidence" value="ECO:0007669"/>
    <property type="project" value="InterPro"/>
</dbReference>
<dbReference type="GO" id="GO:0071453">
    <property type="term" value="P:cellular response to oxygen levels"/>
    <property type="evidence" value="ECO:0000250"/>
    <property type="project" value="UniProtKB"/>
</dbReference>
<dbReference type="GO" id="GO:0042063">
    <property type="term" value="P:gliogenesis"/>
    <property type="evidence" value="ECO:0000250"/>
    <property type="project" value="UniProtKB"/>
</dbReference>
<dbReference type="GO" id="GO:0006120">
    <property type="term" value="P:mitochondrial electron transport, NADH to ubiquinone"/>
    <property type="evidence" value="ECO:0000250"/>
    <property type="project" value="UniProtKB"/>
</dbReference>
<dbReference type="GO" id="GO:0032981">
    <property type="term" value="P:mitochondrial respiratory chain complex I assembly"/>
    <property type="evidence" value="ECO:0000250"/>
    <property type="project" value="UniProtKB"/>
</dbReference>
<dbReference type="GO" id="GO:0061351">
    <property type="term" value="P:neural precursor cell proliferation"/>
    <property type="evidence" value="ECO:0000250"/>
    <property type="project" value="UniProtKB"/>
</dbReference>
<dbReference type="GO" id="GO:0022008">
    <property type="term" value="P:neurogenesis"/>
    <property type="evidence" value="ECO:0000250"/>
    <property type="project" value="UniProtKB"/>
</dbReference>
<dbReference type="FunFam" id="1.10.645.10:FF:000005">
    <property type="entry name" value="NADH-quinone oxidoreductase subunit D"/>
    <property type="match status" value="1"/>
</dbReference>
<dbReference type="Gene3D" id="1.10.645.10">
    <property type="entry name" value="Cytochrome-c3 Hydrogenase, chain B"/>
    <property type="match status" value="1"/>
</dbReference>
<dbReference type="HAMAP" id="MF_01358">
    <property type="entry name" value="NDH1_NuoD"/>
    <property type="match status" value="1"/>
</dbReference>
<dbReference type="InterPro" id="IPR001135">
    <property type="entry name" value="NADH_Q_OxRdtase_suD"/>
</dbReference>
<dbReference type="InterPro" id="IPR014029">
    <property type="entry name" value="NADH_UbQ_OxRdtase_49kDa_CS"/>
</dbReference>
<dbReference type="InterPro" id="IPR022885">
    <property type="entry name" value="NDH1_su_D/H"/>
</dbReference>
<dbReference type="InterPro" id="IPR029014">
    <property type="entry name" value="NiFe-Hase_large"/>
</dbReference>
<dbReference type="NCBIfam" id="TIGR01962">
    <property type="entry name" value="NuoD"/>
    <property type="match status" value="1"/>
</dbReference>
<dbReference type="NCBIfam" id="NF004739">
    <property type="entry name" value="PRK06075.1"/>
    <property type="match status" value="1"/>
</dbReference>
<dbReference type="PANTHER" id="PTHR11993:SF10">
    <property type="entry name" value="NADH DEHYDROGENASE [UBIQUINONE] IRON-SULFUR PROTEIN 2, MITOCHONDRIAL"/>
    <property type="match status" value="1"/>
</dbReference>
<dbReference type="PANTHER" id="PTHR11993">
    <property type="entry name" value="NADH-UBIQUINONE OXIDOREDUCTASE 49 KDA SUBUNIT"/>
    <property type="match status" value="1"/>
</dbReference>
<dbReference type="Pfam" id="PF00346">
    <property type="entry name" value="Complex1_49kDa"/>
    <property type="match status" value="1"/>
</dbReference>
<dbReference type="SUPFAM" id="SSF56762">
    <property type="entry name" value="HydB/Nqo4-like"/>
    <property type="match status" value="1"/>
</dbReference>
<dbReference type="PROSITE" id="PS00535">
    <property type="entry name" value="COMPLEX1_49K"/>
    <property type="match status" value="1"/>
</dbReference>
<organism>
    <name type="scientific">Pongo pygmaeus</name>
    <name type="common">Bornean orangutan</name>
    <dbReference type="NCBI Taxonomy" id="9600"/>
    <lineage>
        <taxon>Eukaryota</taxon>
        <taxon>Metazoa</taxon>
        <taxon>Chordata</taxon>
        <taxon>Craniata</taxon>
        <taxon>Vertebrata</taxon>
        <taxon>Euteleostomi</taxon>
        <taxon>Mammalia</taxon>
        <taxon>Eutheria</taxon>
        <taxon>Euarchontoglires</taxon>
        <taxon>Primates</taxon>
        <taxon>Haplorrhini</taxon>
        <taxon>Catarrhini</taxon>
        <taxon>Hominidae</taxon>
        <taxon>Pongo</taxon>
    </lineage>
</organism>
<name>NDUS2_PONPY</name>
<keyword id="KW-0004">4Fe-4S</keyword>
<keyword id="KW-0007">Acetylation</keyword>
<keyword id="KW-0249">Electron transport</keyword>
<keyword id="KW-0408">Iron</keyword>
<keyword id="KW-0411">Iron-sulfur</keyword>
<keyword id="KW-0472">Membrane</keyword>
<keyword id="KW-0479">Metal-binding</keyword>
<keyword id="KW-0488">Methylation</keyword>
<keyword id="KW-0496">Mitochondrion</keyword>
<keyword id="KW-0999">Mitochondrion inner membrane</keyword>
<keyword id="KW-0520">NAD</keyword>
<keyword id="KW-0560">Oxidoreductase</keyword>
<keyword id="KW-0679">Respiratory chain</keyword>
<keyword id="KW-0809">Transit peptide</keyword>
<keyword id="KW-1278">Translocase</keyword>
<keyword id="KW-0813">Transport</keyword>
<keyword id="KW-0830">Ubiquinone</keyword>
<protein>
    <recommendedName>
        <fullName>NADH dehydrogenase [ubiquinone] iron-sulfur protein 2, mitochondrial</fullName>
        <ecNumber evidence="4">7.1.1.2</ecNumber>
    </recommendedName>
    <alternativeName>
        <fullName>Complex I-49kD</fullName>
        <shortName>CI-49kD</shortName>
    </alternativeName>
    <alternativeName>
        <fullName>NADH-ubiquinone oxidoreductase 49 kDa subunit</fullName>
    </alternativeName>
</protein>
<accession>Q0MQG3</accession>
<comment type="function">
    <text evidence="4">Core subunit of the mitochondrial membrane respiratory chain NADH dehydrogenase (Complex I) which catalyzes electron transfer from NADH through the respiratory chain, using ubiquinone as an electron acceptor (By similarity). Essential for the catalytic activity and assembly of complex I (By similarity). Redox-sensitive, critical component of the oxygen-sensing pathway in the pulmonary vasculature which plays a key role in acute pulmonary oxygen-sensing and hypoxic pulmonary vasoconstriction (By similarity). Plays an important role in carotid body sensing of hypoxia (By similarity). Essential for glia-like neural stem and progenitor cell proliferation, differentiation and subsequent oligodendrocyte or neuronal maturation (By similarity).</text>
</comment>
<comment type="catalytic activity">
    <reaction evidence="4">
        <text>a ubiquinone + NADH + 5 H(+)(in) = a ubiquinol + NAD(+) + 4 H(+)(out)</text>
        <dbReference type="Rhea" id="RHEA:29091"/>
        <dbReference type="Rhea" id="RHEA-COMP:9565"/>
        <dbReference type="Rhea" id="RHEA-COMP:9566"/>
        <dbReference type="ChEBI" id="CHEBI:15378"/>
        <dbReference type="ChEBI" id="CHEBI:16389"/>
        <dbReference type="ChEBI" id="CHEBI:17976"/>
        <dbReference type="ChEBI" id="CHEBI:57540"/>
        <dbReference type="ChEBI" id="CHEBI:57945"/>
        <dbReference type="EC" id="7.1.1.2"/>
    </reaction>
</comment>
<comment type="cofactor">
    <cofactor>
        <name>[4Fe-4S] cluster</name>
        <dbReference type="ChEBI" id="CHEBI:49883"/>
    </cofactor>
    <text>Binds 1 [4Fe-4S] cluster.</text>
</comment>
<comment type="subunit">
    <text evidence="1 4">Core subunit of respiratory chain NADH dehydrogenase (Complex I) which is composed of 45 different subunits. Component of the iron-sulfur (IP) fragment of the enzyme. Interacts with NDUFAF3. Interacts with NDUFAF7 (By similarity). Interacts with CERS2 (By similarity).</text>
</comment>
<comment type="subcellular location">
    <subcellularLocation>
        <location evidence="3">Mitochondrion inner membrane</location>
        <topology evidence="3">Peripheral membrane protein</topology>
        <orientation evidence="3">Matrix side</orientation>
    </subcellularLocation>
</comment>
<comment type="PTM">
    <text evidence="1">Dimethylation at Arg-118 by NDUFAF7 takes place after NDUFS2 assembles into the complex I, leading to stabilize the early intermediate complex.</text>
</comment>
<comment type="similarity">
    <text evidence="6">Belongs to the complex I 49 kDa subunit family.</text>
</comment>
<feature type="transit peptide" description="Mitochondrion" evidence="2">
    <location>
        <begin position="1"/>
        <end position="33"/>
    </location>
</feature>
<feature type="chain" id="PRO_0000251858" description="NADH dehydrogenase [ubiquinone] iron-sulfur protein 2, mitochondrial">
    <location>
        <begin position="34"/>
        <end position="463"/>
    </location>
</feature>
<feature type="binding site" evidence="5">
    <location>
        <position position="326"/>
    </location>
    <ligand>
        <name>[4Fe-4S] cluster</name>
        <dbReference type="ChEBI" id="CHEBI:49883"/>
    </ligand>
</feature>
<feature type="binding site" evidence="5">
    <location>
        <position position="332"/>
    </location>
    <ligand>
        <name>[4Fe-4S] cluster</name>
        <dbReference type="ChEBI" id="CHEBI:49883"/>
    </ligand>
</feature>
<feature type="binding site" evidence="5">
    <location>
        <position position="347"/>
    </location>
    <ligand>
        <name>[4Fe-4S] cluster</name>
        <dbReference type="ChEBI" id="CHEBI:49883"/>
    </ligand>
</feature>
<feature type="modified residue" description="N6-acetyllysine" evidence="4">
    <location>
        <position position="62"/>
    </location>
</feature>
<feature type="modified residue" description="Symmetric dimethylarginine" evidence="2">
    <location>
        <position position="118"/>
    </location>
</feature>
<reference key="1">
    <citation type="journal article" date="2006" name="Gene">
        <title>Adaptive selection of mitochondrial complex I subunits during primate radiation.</title>
        <authorList>
            <person name="Mishmar D."/>
            <person name="Ruiz-Pesini E."/>
            <person name="Mondragon-Palomino M."/>
            <person name="Procaccio V."/>
            <person name="Gaut B."/>
            <person name="Wallace D.C."/>
        </authorList>
    </citation>
    <scope>NUCLEOTIDE SEQUENCE [MRNA]</scope>
</reference>